<evidence type="ECO:0000250" key="1"/>
<evidence type="ECO:0000255" key="2"/>
<evidence type="ECO:0000255" key="3">
    <source>
        <dbReference type="PROSITE-ProRule" id="PRU00247"/>
    </source>
</evidence>
<evidence type="ECO:0000255" key="4">
    <source>
        <dbReference type="PROSITE-ProRule" id="PRU00267"/>
    </source>
</evidence>
<evidence type="ECO:0000256" key="5">
    <source>
        <dbReference type="SAM" id="MobiDB-lite"/>
    </source>
</evidence>
<evidence type="ECO:0000269" key="6">
    <source>
    </source>
</evidence>
<evidence type="ECO:0000269" key="7">
    <source>
    </source>
</evidence>
<evidence type="ECO:0000269" key="8">
    <source>
    </source>
</evidence>
<evidence type="ECO:0000269" key="9">
    <source>
    </source>
</evidence>
<evidence type="ECO:0000269" key="10">
    <source>
    </source>
</evidence>
<evidence type="ECO:0000305" key="11"/>
<accession>Q9Y802</accession>
<accession>Q9UTV0</accession>
<sequence>MMDLSSKDALSDVLKDTHAQSSDPSLWAIFGHQSSDNVHEGGNESVSVEQEIFDLSQLSERPVSETVSKASIPTNINGLSQVKPSALEKSQEVLSLQKLPIKGRRPAGRRGRPALNTSNSLERNGTRYVSAEAPISVKSSIPAIPRVTFERLCYESAIASNLPPNALSPLEAEMLSEILENPTWLSLYLSIRNGICYLWHRNPTLYVSFNEALGIVREKKAFPLASLAFEFLSRNGHINYGCIYIISSLKLDESLSQKTVAIIGAGMAGISCARQLTNLFAQYEQDFLSRGEKPPRIVIYEASERLGGHIYTHMVPLSDNEVSEKSSLATTVNATNECMVNLLTDSLIGMPTLDSDPLYIISSQQLSLDAVHTRNREFILHDIENGRIDTEHVQRIFRLFDALLFYFNASASKQPLHSLITPPEQEFIQKLDQIGWYISIEAFPLQIKDTLSEFLGNSANTLTSLLHLTVLDLKIFEWFKEYLSQSLSVSLENVYPGSIPNLNLLLGENVASYSFKHGMADMLNSLASTPSPLPILFDQCVHTVKLEDNTVNLSFVNETTVSVDKVVICIPMDKLNTHLITFEPPLEEKKLKAIDRCHFTNVKKVILIFKTQFWEPNISIFGSLPQDSGRNFIFNDCTRFYEHPTLSVFVKVEGIDFMKDDDIVNGIVSQLKKVYKPKSEAINPIRTIISNWENNSYTNHSSYQISNLFLEEDYAILSEPIDNTVFFASEAISQKNSGSIRGAFDSGILAARDVLASLIGNVVLPNTLVIEENLEQPRKTYGTKRNAQQALGKEGERENKEKRISYHTEYLRLRQKRLDKEQQECDLLIAELLGPSPVPPSRPSANPYLLYQKTQWHVCKTLADQDKQRVTGDPEARATKNEIRAKLGKTWRALDSLGKQPWVDEINARRANYSTRLEEYQRQINSYNVRVAQIKSEHQRRCESQPIPEDEAKLKLLAEQEDEHLHPEKEGMSVENSDDDYHDDLDYEDSISEVFPDNFS</sequence>
<reference key="1">
    <citation type="journal article" date="2002" name="Nature">
        <title>The genome sequence of Schizosaccharomyces pombe.</title>
        <authorList>
            <person name="Wood V."/>
            <person name="Gwilliam R."/>
            <person name="Rajandream M.A."/>
            <person name="Lyne M.H."/>
            <person name="Lyne R."/>
            <person name="Stewart A."/>
            <person name="Sgouros J.G."/>
            <person name="Peat N."/>
            <person name="Hayles J."/>
            <person name="Baker S.G."/>
            <person name="Basham D."/>
            <person name="Bowman S."/>
            <person name="Brooks K."/>
            <person name="Brown D."/>
            <person name="Brown S."/>
            <person name="Chillingworth T."/>
            <person name="Churcher C.M."/>
            <person name="Collins M."/>
            <person name="Connor R."/>
            <person name="Cronin A."/>
            <person name="Davis P."/>
            <person name="Feltwell T."/>
            <person name="Fraser A."/>
            <person name="Gentles S."/>
            <person name="Goble A."/>
            <person name="Hamlin N."/>
            <person name="Harris D.E."/>
            <person name="Hidalgo J."/>
            <person name="Hodgson G."/>
            <person name="Holroyd S."/>
            <person name="Hornsby T."/>
            <person name="Howarth S."/>
            <person name="Huckle E.J."/>
            <person name="Hunt S."/>
            <person name="Jagels K."/>
            <person name="James K.D."/>
            <person name="Jones L."/>
            <person name="Jones M."/>
            <person name="Leather S."/>
            <person name="McDonald S."/>
            <person name="McLean J."/>
            <person name="Mooney P."/>
            <person name="Moule S."/>
            <person name="Mungall K.L."/>
            <person name="Murphy L.D."/>
            <person name="Niblett D."/>
            <person name="Odell C."/>
            <person name="Oliver K."/>
            <person name="O'Neil S."/>
            <person name="Pearson D."/>
            <person name="Quail M.A."/>
            <person name="Rabbinowitsch E."/>
            <person name="Rutherford K.M."/>
            <person name="Rutter S."/>
            <person name="Saunders D."/>
            <person name="Seeger K."/>
            <person name="Sharp S."/>
            <person name="Skelton J."/>
            <person name="Simmonds M.N."/>
            <person name="Squares R."/>
            <person name="Squares S."/>
            <person name="Stevens K."/>
            <person name="Taylor K."/>
            <person name="Taylor R.G."/>
            <person name="Tivey A."/>
            <person name="Walsh S.V."/>
            <person name="Warren T."/>
            <person name="Whitehead S."/>
            <person name="Woodward J.R."/>
            <person name="Volckaert G."/>
            <person name="Aert R."/>
            <person name="Robben J."/>
            <person name="Grymonprez B."/>
            <person name="Weltjens I."/>
            <person name="Vanstreels E."/>
            <person name="Rieger M."/>
            <person name="Schaefer M."/>
            <person name="Mueller-Auer S."/>
            <person name="Gabel C."/>
            <person name="Fuchs M."/>
            <person name="Duesterhoeft A."/>
            <person name="Fritzc C."/>
            <person name="Holzer E."/>
            <person name="Moestl D."/>
            <person name="Hilbert H."/>
            <person name="Borzym K."/>
            <person name="Langer I."/>
            <person name="Beck A."/>
            <person name="Lehrach H."/>
            <person name="Reinhardt R."/>
            <person name="Pohl T.M."/>
            <person name="Eger P."/>
            <person name="Zimmermann W."/>
            <person name="Wedler H."/>
            <person name="Wambutt R."/>
            <person name="Purnelle B."/>
            <person name="Goffeau A."/>
            <person name="Cadieu E."/>
            <person name="Dreano S."/>
            <person name="Gloux S."/>
            <person name="Lelaure V."/>
            <person name="Mottier S."/>
            <person name="Galibert F."/>
            <person name="Aves S.J."/>
            <person name="Xiang Z."/>
            <person name="Hunt C."/>
            <person name="Moore K."/>
            <person name="Hurst S.M."/>
            <person name="Lucas M."/>
            <person name="Rochet M."/>
            <person name="Gaillardin C."/>
            <person name="Tallada V.A."/>
            <person name="Garzon A."/>
            <person name="Thode G."/>
            <person name="Daga R.R."/>
            <person name="Cruzado L."/>
            <person name="Jimenez J."/>
            <person name="Sanchez M."/>
            <person name="del Rey F."/>
            <person name="Benito J."/>
            <person name="Dominguez A."/>
            <person name="Revuelta J.L."/>
            <person name="Moreno S."/>
            <person name="Armstrong J."/>
            <person name="Forsburg S.L."/>
            <person name="Cerutti L."/>
            <person name="Lowe T."/>
            <person name="McCombie W.R."/>
            <person name="Paulsen I."/>
            <person name="Potashkin J."/>
            <person name="Shpakovski G.V."/>
            <person name="Ussery D."/>
            <person name="Barrell B.G."/>
            <person name="Nurse P."/>
        </authorList>
    </citation>
    <scope>NUCLEOTIDE SEQUENCE [LARGE SCALE GENOMIC DNA]</scope>
    <source>
        <strain>972 / ATCC 24843</strain>
    </source>
</reference>
<reference key="2">
    <citation type="journal article" date="2000" name="Genes Cells">
        <title>Large-scale screening of intracellular protein localization in living fission yeast cells by the use of a GFP-fusion genomic DNA library.</title>
        <authorList>
            <person name="Ding D.-Q."/>
            <person name="Tomita Y."/>
            <person name="Yamamoto A."/>
            <person name="Chikashige Y."/>
            <person name="Haraguchi T."/>
            <person name="Hiraoka Y."/>
        </authorList>
    </citation>
    <scope>NUCLEOTIDE SEQUENCE [LARGE SCALE GENOMIC DNA] OF 694-873</scope>
    <scope>SUBCELLULAR LOCATION</scope>
    <source>
        <strain>ATCC 38364 / 968</strain>
    </source>
</reference>
<reference key="3">
    <citation type="journal article" date="2006" name="J. Biol. Chem.">
        <title>Fission yeast homologs of human histone H3 lysine 4 demethylase regulate a common set of genes with diverse functions.</title>
        <authorList>
            <person name="Nicolas E."/>
            <person name="Lee M.G."/>
            <person name="Hakimi M.-A."/>
            <person name="Cam H.P."/>
            <person name="Grewal S.I.S."/>
            <person name="Shiekhattar R."/>
        </authorList>
    </citation>
    <scope>FUNCTION</scope>
    <scope>INTERACTION WITH LSD2</scope>
    <scope>SUBCELLULAR LOCATION</scope>
</reference>
<reference key="4">
    <citation type="journal article" date="2006" name="Nat. Biotechnol.">
        <title>ORFeome cloning and global analysis of protein localization in the fission yeast Schizosaccharomyces pombe.</title>
        <authorList>
            <person name="Matsuyama A."/>
            <person name="Arai R."/>
            <person name="Yashiroda Y."/>
            <person name="Shirai A."/>
            <person name="Kamata A."/>
            <person name="Sekido S."/>
            <person name="Kobayashi Y."/>
            <person name="Hashimoto A."/>
            <person name="Hamamoto M."/>
            <person name="Hiraoka Y."/>
            <person name="Horinouchi S."/>
            <person name="Yoshida M."/>
        </authorList>
    </citation>
    <scope>SUBCELLULAR LOCATION [LARGE SCALE ANALYSIS]</scope>
</reference>
<reference key="5">
    <citation type="journal article" date="2007" name="Mol. Cell">
        <title>S. pombe LSD1 homologs regulate heterochromatin propagation and euchromatic gene transcription.</title>
        <authorList>
            <person name="Lan F."/>
            <person name="Zaratiegui M."/>
            <person name="Villen J."/>
            <person name="Vaughn M.W."/>
            <person name="Verdel A."/>
            <person name="Huarte M."/>
            <person name="Shi Y."/>
            <person name="Gygi S.P."/>
            <person name="Moazed D."/>
            <person name="Martienssen R.A."/>
            <person name="Shi Y."/>
        </authorList>
    </citation>
    <scope>FUNCTION</scope>
    <scope>IDENTIFICATION IN THE SWM HISTONE DEMETHYLASE COMPLEX</scope>
    <scope>INTERACTION WITH LSD2</scope>
</reference>
<reference key="6">
    <citation type="journal article" date="2007" name="PLoS ONE">
        <title>Genome-wide studies of histone demethylation catalysed by the fission yeast homologues of mammalian LSD1.</title>
        <authorList>
            <person name="Opel M."/>
            <person name="Lando D."/>
            <person name="Bonilla C."/>
            <person name="Trewick S.C."/>
            <person name="Boukaba A."/>
            <person name="Walfridsson J."/>
            <person name="Cauwood J."/>
            <person name="Werler P.J."/>
            <person name="Carr A.M."/>
            <person name="Kouzarides T."/>
            <person name="Murzina N.V."/>
            <person name="Allshire R.C."/>
            <person name="Ekwall K."/>
            <person name="Laue E.D."/>
        </authorList>
    </citation>
    <scope>IDENTIFICATION IN THE SWM HISTONE DEMETHYLASE COMPLEX</scope>
    <scope>FUNCTION OF THE SWM COMPLEX</scope>
</reference>
<gene>
    <name type="primary">lsd1</name>
    <name type="synonym">saf110</name>
    <name type="synonym">swm1</name>
    <name type="ORF">SPBC146.09c</name>
</gene>
<comment type="function">
    <text evidence="8 9 10">Catalytic component of the SWM histone demethylase complex that specifically demethylates H3K9me2, a specific tag for epigenetic transcriptional activation, thereby acting as a corepressor. Acts by oxidizing the substrate by FAD to generate the corresponding imine that is subsequently hydrolyzed. Has a role in regulating heterochromatin propagation and euchromatic transcription. Also has a gene activating role.</text>
</comment>
<comment type="cofactor">
    <cofactor>
        <name>FAD</name>
        <dbReference type="ChEBI" id="CHEBI:57692"/>
    </cofactor>
</comment>
<comment type="subunit">
    <text evidence="8 9 10">Component of the SWM histone demethylase complex composed of at least lsd1, lsd2, phf1 and phf2. Interacts directly with lsd2.</text>
</comment>
<comment type="subcellular location">
    <subcellularLocation>
        <location evidence="4 6 7 8">Nucleus</location>
    </subcellularLocation>
</comment>
<comment type="similarity">
    <text evidence="11">Belongs to the flavin monoamine oxidase family.</text>
</comment>
<organism>
    <name type="scientific">Schizosaccharomyces pombe (strain 972 / ATCC 24843)</name>
    <name type="common">Fission yeast</name>
    <dbReference type="NCBI Taxonomy" id="284812"/>
    <lineage>
        <taxon>Eukaryota</taxon>
        <taxon>Fungi</taxon>
        <taxon>Dikarya</taxon>
        <taxon>Ascomycota</taxon>
        <taxon>Taphrinomycotina</taxon>
        <taxon>Schizosaccharomycetes</taxon>
        <taxon>Schizosaccharomycetales</taxon>
        <taxon>Schizosaccharomycetaceae</taxon>
        <taxon>Schizosaccharomyces</taxon>
    </lineage>
</organism>
<feature type="chain" id="PRO_0000363001" description="Lysine-specific histone demethylase 1">
    <location>
        <begin position="1"/>
        <end position="1000"/>
    </location>
</feature>
<feature type="domain" description="SWIRM" evidence="3">
    <location>
        <begin position="153"/>
        <end position="249"/>
    </location>
</feature>
<feature type="DNA-binding region" description="HMG box" evidence="4">
    <location>
        <begin position="841"/>
        <end position="921"/>
    </location>
</feature>
<feature type="region of interest" description="Disordered" evidence="5">
    <location>
        <begin position="104"/>
        <end position="123"/>
    </location>
</feature>
<feature type="region of interest" description="Demethylase activity" evidence="1">
    <location>
        <begin position="279"/>
        <end position="950"/>
    </location>
</feature>
<feature type="region of interest" description="Disordered" evidence="5">
    <location>
        <begin position="780"/>
        <end position="800"/>
    </location>
</feature>
<feature type="region of interest" description="Disordered" evidence="5">
    <location>
        <begin position="959"/>
        <end position="1000"/>
    </location>
</feature>
<feature type="coiled-coil region" evidence="2">
    <location>
        <begin position="107"/>
        <end position="137"/>
    </location>
</feature>
<feature type="coiled-coil region" evidence="2">
    <location>
        <begin position="434"/>
        <end position="529"/>
    </location>
</feature>
<feature type="compositionally biased region" description="Basic and acidic residues" evidence="5">
    <location>
        <begin position="959"/>
        <end position="972"/>
    </location>
</feature>
<feature type="compositionally biased region" description="Acidic residues" evidence="5">
    <location>
        <begin position="976"/>
        <end position="991"/>
    </location>
</feature>
<feature type="binding site" evidence="2">
    <location>
        <begin position="260"/>
        <end position="302"/>
    </location>
    <ligand>
        <name>FAD</name>
        <dbReference type="ChEBI" id="CHEBI:57692"/>
    </ligand>
</feature>
<feature type="binding site" evidence="1">
    <location>
        <position position="301"/>
    </location>
    <ligand>
        <name>FAD</name>
        <dbReference type="ChEBI" id="CHEBI:57692"/>
    </ligand>
</feature>
<feature type="binding site" evidence="1">
    <location>
        <begin position="328"/>
        <end position="329"/>
    </location>
    <ligand>
        <name>FAD</name>
        <dbReference type="ChEBI" id="CHEBI:57692"/>
    </ligand>
</feature>
<feature type="binding site" evidence="1">
    <location>
        <begin position="908"/>
        <end position="909"/>
    </location>
    <ligand>
        <name>FAD</name>
        <dbReference type="ChEBI" id="CHEBI:57692"/>
    </ligand>
</feature>
<keyword id="KW-0156">Chromatin regulator</keyword>
<keyword id="KW-0175">Coiled coil</keyword>
<keyword id="KW-0238">DNA-binding</keyword>
<keyword id="KW-0274">FAD</keyword>
<keyword id="KW-0285">Flavoprotein</keyword>
<keyword id="KW-0539">Nucleus</keyword>
<keyword id="KW-0560">Oxidoreductase</keyword>
<keyword id="KW-1185">Reference proteome</keyword>
<keyword id="KW-0678">Repressor</keyword>
<keyword id="KW-0804">Transcription</keyword>
<keyword id="KW-0805">Transcription regulation</keyword>
<dbReference type="EC" id="1.-.-.-"/>
<dbReference type="EMBL" id="CU329671">
    <property type="protein sequence ID" value="CAB46762.1"/>
    <property type="molecule type" value="Genomic_DNA"/>
</dbReference>
<dbReference type="EMBL" id="AB027980">
    <property type="protein sequence ID" value="BAA87284.1"/>
    <property type="molecule type" value="Genomic_DNA"/>
</dbReference>
<dbReference type="PIR" id="T39423">
    <property type="entry name" value="T39423"/>
</dbReference>
<dbReference type="RefSeq" id="NP_595398.1">
    <property type="nucleotide sequence ID" value="NM_001021305.2"/>
</dbReference>
<dbReference type="SMR" id="Q9Y802"/>
<dbReference type="BioGRID" id="276355">
    <property type="interactions" value="15"/>
</dbReference>
<dbReference type="ComplexPortal" id="CPX-10327">
    <property type="entry name" value="SWM histone demethylase complex"/>
</dbReference>
<dbReference type="FunCoup" id="Q9Y802">
    <property type="interactions" value="379"/>
</dbReference>
<dbReference type="STRING" id="284812.Q9Y802"/>
<dbReference type="iPTMnet" id="Q9Y802"/>
<dbReference type="PaxDb" id="4896-SPBC146.09c.1"/>
<dbReference type="EnsemblFungi" id="SPBC146.09c.1">
    <property type="protein sequence ID" value="SPBC146.09c.1:pep"/>
    <property type="gene ID" value="SPBC146.09c"/>
</dbReference>
<dbReference type="GeneID" id="2539805"/>
<dbReference type="KEGG" id="spo:2539805"/>
<dbReference type="PomBase" id="SPBC146.09c">
    <property type="gene designation" value="lsd1"/>
</dbReference>
<dbReference type="VEuPathDB" id="FungiDB:SPBC146.09c"/>
<dbReference type="eggNOG" id="KOG0029">
    <property type="taxonomic scope" value="Eukaryota"/>
</dbReference>
<dbReference type="HOGENOM" id="CLU_004498_1_2_1"/>
<dbReference type="InParanoid" id="Q9Y802"/>
<dbReference type="OMA" id="KTQWHVC"/>
<dbReference type="PhylomeDB" id="Q9Y802"/>
<dbReference type="BRENDA" id="1.14.11.65">
    <property type="organism ID" value="5613"/>
</dbReference>
<dbReference type="Reactome" id="R-SPO-3214842">
    <property type="pathway name" value="HDMs demethylate histones"/>
</dbReference>
<dbReference type="Reactome" id="R-SPO-5625886">
    <property type="pathway name" value="Activated PKN1 stimulates transcription of AR (androgen receptor) regulated genes KLK2 and KLK3"/>
</dbReference>
<dbReference type="Reactome" id="R-SPO-9018519">
    <property type="pathway name" value="Estrogen-dependent gene expression"/>
</dbReference>
<dbReference type="PRO" id="PR:Q9Y802"/>
<dbReference type="Proteomes" id="UP000002485">
    <property type="component" value="Chromosome II"/>
</dbReference>
<dbReference type="GO" id="GO:0000785">
    <property type="term" value="C:chromatin"/>
    <property type="evidence" value="ECO:0000314"/>
    <property type="project" value="PomBase"/>
</dbReference>
<dbReference type="GO" id="GO:0033193">
    <property type="term" value="C:Lsd1/2 complex"/>
    <property type="evidence" value="ECO:0000314"/>
    <property type="project" value="PomBase"/>
</dbReference>
<dbReference type="GO" id="GO:0031934">
    <property type="term" value="C:mating-type region heterochromatin"/>
    <property type="evidence" value="ECO:0000314"/>
    <property type="project" value="PomBase"/>
</dbReference>
<dbReference type="GO" id="GO:0005634">
    <property type="term" value="C:nucleus"/>
    <property type="evidence" value="ECO:0000303"/>
    <property type="project" value="PomBase"/>
</dbReference>
<dbReference type="GO" id="GO:0005721">
    <property type="term" value="C:pericentric heterochromatin"/>
    <property type="evidence" value="ECO:0000314"/>
    <property type="project" value="PomBase"/>
</dbReference>
<dbReference type="GO" id="GO:0140720">
    <property type="term" value="C:subtelomeric heterochromatin"/>
    <property type="evidence" value="ECO:0000314"/>
    <property type="project" value="PomBase"/>
</dbReference>
<dbReference type="GO" id="GO:0003677">
    <property type="term" value="F:DNA binding"/>
    <property type="evidence" value="ECO:0007669"/>
    <property type="project" value="UniProtKB-KW"/>
</dbReference>
<dbReference type="GO" id="GO:0140683">
    <property type="term" value="F:histone H3K9me/H3K9me2 demethylase activity"/>
    <property type="evidence" value="ECO:0000314"/>
    <property type="project" value="PomBase"/>
</dbReference>
<dbReference type="GO" id="GO:0016491">
    <property type="term" value="F:oxidoreductase activity"/>
    <property type="evidence" value="ECO:0000318"/>
    <property type="project" value="GO_Central"/>
</dbReference>
<dbReference type="GO" id="GO:1990841">
    <property type="term" value="F:promoter-specific chromatin binding"/>
    <property type="evidence" value="ECO:0000269"/>
    <property type="project" value="PomBase"/>
</dbReference>
<dbReference type="GO" id="GO:0140718">
    <property type="term" value="P:facultative heterochromatin formation"/>
    <property type="evidence" value="ECO:0000269"/>
    <property type="project" value="PomBase"/>
</dbReference>
<dbReference type="GO" id="GO:0033696">
    <property type="term" value="P:heterochromatin boundary formation"/>
    <property type="evidence" value="ECO:0000315"/>
    <property type="project" value="PomBase"/>
</dbReference>
<dbReference type="GO" id="GO:0071515">
    <property type="term" value="P:mating-type locus imprinting"/>
    <property type="evidence" value="ECO:0000315"/>
    <property type="project" value="PomBase"/>
</dbReference>
<dbReference type="GO" id="GO:0031508">
    <property type="term" value="P:pericentric heterochromatin formation"/>
    <property type="evidence" value="ECO:0000315"/>
    <property type="project" value="PomBase"/>
</dbReference>
<dbReference type="GO" id="GO:1902681">
    <property type="term" value="P:regulation of replication fork arrest at rDNA repeats"/>
    <property type="evidence" value="ECO:0000315"/>
    <property type="project" value="PomBase"/>
</dbReference>
<dbReference type="GO" id="GO:0011000">
    <property type="term" value="P:replication fork arrest at mating type locus"/>
    <property type="evidence" value="ECO:0000315"/>
    <property type="project" value="PomBase"/>
</dbReference>
<dbReference type="GO" id="GO:0030466">
    <property type="term" value="P:silent mating-type cassette heterochromatin formation"/>
    <property type="evidence" value="ECO:0000315"/>
    <property type="project" value="PomBase"/>
</dbReference>
<dbReference type="GO" id="GO:0031509">
    <property type="term" value="P:subtelomeric heterochromatin formation"/>
    <property type="evidence" value="ECO:0000316"/>
    <property type="project" value="PomBase"/>
</dbReference>
<dbReference type="FunFam" id="1.10.30.10:FF:000067">
    <property type="entry name" value="Lysine-specific histone demethylase Aof2, putative"/>
    <property type="match status" value="1"/>
</dbReference>
<dbReference type="Gene3D" id="3.50.50.60">
    <property type="entry name" value="FAD/NAD(P)-binding domain"/>
    <property type="match status" value="2"/>
</dbReference>
<dbReference type="Gene3D" id="1.10.30.10">
    <property type="entry name" value="High mobility group box domain"/>
    <property type="match status" value="1"/>
</dbReference>
<dbReference type="Gene3D" id="1.10.10.10">
    <property type="entry name" value="Winged helix-like DNA-binding domain superfamily/Winged helix DNA-binding domain"/>
    <property type="match status" value="1"/>
</dbReference>
<dbReference type="InterPro" id="IPR002937">
    <property type="entry name" value="Amino_oxidase"/>
</dbReference>
<dbReference type="InterPro" id="IPR036188">
    <property type="entry name" value="FAD/NAD-bd_sf"/>
</dbReference>
<dbReference type="InterPro" id="IPR050281">
    <property type="entry name" value="Flavin_monoamine_oxidase"/>
</dbReference>
<dbReference type="InterPro" id="IPR009071">
    <property type="entry name" value="HMG_box_dom"/>
</dbReference>
<dbReference type="InterPro" id="IPR036910">
    <property type="entry name" value="HMG_box_dom_sf"/>
</dbReference>
<dbReference type="InterPro" id="IPR009057">
    <property type="entry name" value="Homeodomain-like_sf"/>
</dbReference>
<dbReference type="InterPro" id="IPR007526">
    <property type="entry name" value="SWIRM"/>
</dbReference>
<dbReference type="InterPro" id="IPR036388">
    <property type="entry name" value="WH-like_DNA-bd_sf"/>
</dbReference>
<dbReference type="PANTHER" id="PTHR10742">
    <property type="entry name" value="FLAVIN MONOAMINE OXIDASE"/>
    <property type="match status" value="1"/>
</dbReference>
<dbReference type="PANTHER" id="PTHR10742:SF410">
    <property type="entry name" value="LYSINE-SPECIFIC HISTONE DEMETHYLASE 2"/>
    <property type="match status" value="1"/>
</dbReference>
<dbReference type="Pfam" id="PF01593">
    <property type="entry name" value="Amino_oxidase"/>
    <property type="match status" value="1"/>
</dbReference>
<dbReference type="Pfam" id="PF04433">
    <property type="entry name" value="SWIRM"/>
    <property type="match status" value="1"/>
</dbReference>
<dbReference type="SUPFAM" id="SSF54373">
    <property type="entry name" value="FAD-linked reductases, C-terminal domain"/>
    <property type="match status" value="1"/>
</dbReference>
<dbReference type="SUPFAM" id="SSF51905">
    <property type="entry name" value="FAD/NAD(P)-binding domain"/>
    <property type="match status" value="1"/>
</dbReference>
<dbReference type="SUPFAM" id="SSF47095">
    <property type="entry name" value="HMG-box"/>
    <property type="match status" value="1"/>
</dbReference>
<dbReference type="SUPFAM" id="SSF46689">
    <property type="entry name" value="Homeodomain-like"/>
    <property type="match status" value="1"/>
</dbReference>
<dbReference type="PROSITE" id="PS50118">
    <property type="entry name" value="HMG_BOX_2"/>
    <property type="match status" value="1"/>
</dbReference>
<dbReference type="PROSITE" id="PS50934">
    <property type="entry name" value="SWIRM"/>
    <property type="match status" value="1"/>
</dbReference>
<name>LSD1_SCHPO</name>
<proteinExistence type="evidence at protein level"/>
<protein>
    <recommendedName>
        <fullName>Lysine-specific histone demethylase 1</fullName>
        <ecNumber>1.-.-.-</ecNumber>
    </recommendedName>
</protein>